<accession>B6HV34</accession>
<name>ADRF_PENRW</name>
<organism>
    <name type="scientific">Penicillium rubens (strain ATCC 28089 / DSM 1075 / NRRL 1951 / Wisconsin 54-1255)</name>
    <name type="common">Penicillium chrysogenum</name>
    <dbReference type="NCBI Taxonomy" id="500485"/>
    <lineage>
        <taxon>Eukaryota</taxon>
        <taxon>Fungi</taxon>
        <taxon>Dikarya</taxon>
        <taxon>Ascomycota</taxon>
        <taxon>Pezizomycotina</taxon>
        <taxon>Eurotiomycetes</taxon>
        <taxon>Eurotiomycetidae</taxon>
        <taxon>Eurotiales</taxon>
        <taxon>Aspergillaceae</taxon>
        <taxon>Penicillium</taxon>
        <taxon>Penicillium chrysogenum species complex</taxon>
    </lineage>
</organism>
<gene>
    <name evidence="5" type="primary">adrF</name>
    <name type="ORF">Pc22g22870</name>
</gene>
<dbReference type="EC" id="1.1.1.-" evidence="4"/>
<dbReference type="EMBL" id="AM920437">
    <property type="protein sequence ID" value="CAP99575.1"/>
    <property type="molecule type" value="Genomic_DNA"/>
</dbReference>
<dbReference type="RefSeq" id="XP_002566181.1">
    <property type="nucleotide sequence ID" value="XM_002566135.1"/>
</dbReference>
<dbReference type="SMR" id="B6HV34"/>
<dbReference type="STRING" id="500485.B6HV34"/>
<dbReference type="GeneID" id="8309013"/>
<dbReference type="KEGG" id="pcs:N7525_004100"/>
<dbReference type="VEuPathDB" id="FungiDB:PCH_Pc22g22870"/>
<dbReference type="eggNOG" id="KOG0725">
    <property type="taxonomic scope" value="Eukaryota"/>
</dbReference>
<dbReference type="HOGENOM" id="CLU_010194_1_0_1"/>
<dbReference type="OMA" id="IPIDNAW"/>
<dbReference type="OrthoDB" id="37659at2759"/>
<dbReference type="BioCyc" id="PCHR:PC22G22870-MONOMER"/>
<dbReference type="UniPathway" id="UPA00213"/>
<dbReference type="Proteomes" id="UP000000724">
    <property type="component" value="Contig Pc00c22"/>
</dbReference>
<dbReference type="GO" id="GO:0016491">
    <property type="term" value="F:oxidoreductase activity"/>
    <property type="evidence" value="ECO:0007669"/>
    <property type="project" value="UniProtKB-KW"/>
</dbReference>
<dbReference type="GO" id="GO:0016114">
    <property type="term" value="P:terpenoid biosynthetic process"/>
    <property type="evidence" value="ECO:0007669"/>
    <property type="project" value="UniProtKB-UniPathway"/>
</dbReference>
<dbReference type="CDD" id="cd05233">
    <property type="entry name" value="SDR_c"/>
    <property type="match status" value="1"/>
</dbReference>
<dbReference type="FunFam" id="3.40.50.720:FF:000084">
    <property type="entry name" value="Short-chain dehydrogenase reductase"/>
    <property type="match status" value="1"/>
</dbReference>
<dbReference type="Gene3D" id="3.40.50.720">
    <property type="entry name" value="NAD(P)-binding Rossmann-like Domain"/>
    <property type="match status" value="1"/>
</dbReference>
<dbReference type="InterPro" id="IPR036291">
    <property type="entry name" value="NAD(P)-bd_dom_sf"/>
</dbReference>
<dbReference type="InterPro" id="IPR002347">
    <property type="entry name" value="SDR_fam"/>
</dbReference>
<dbReference type="InterPro" id="IPR051122">
    <property type="entry name" value="SDR_superfamily_enzyme"/>
</dbReference>
<dbReference type="PANTHER" id="PTHR43477">
    <property type="entry name" value="DIHYDROANTICAPSIN 7-DEHYDROGENASE"/>
    <property type="match status" value="1"/>
</dbReference>
<dbReference type="PANTHER" id="PTHR43477:SF1">
    <property type="entry name" value="DIHYDROANTICAPSIN 7-DEHYDROGENASE"/>
    <property type="match status" value="1"/>
</dbReference>
<dbReference type="Pfam" id="PF00106">
    <property type="entry name" value="adh_short"/>
    <property type="match status" value="1"/>
</dbReference>
<dbReference type="PRINTS" id="PR00081">
    <property type="entry name" value="GDHRDH"/>
</dbReference>
<dbReference type="PRINTS" id="PR00080">
    <property type="entry name" value="SDRFAMILY"/>
</dbReference>
<dbReference type="SUPFAM" id="SSF51735">
    <property type="entry name" value="NAD(P)-binding Rossmann-fold domains"/>
    <property type="match status" value="1"/>
</dbReference>
<keyword id="KW-0521">NADP</keyword>
<keyword id="KW-0560">Oxidoreductase</keyword>
<keyword id="KW-1185">Reference proteome</keyword>
<protein>
    <recommendedName>
        <fullName evidence="5">Short chain dehydrogenase adrF</fullName>
        <ecNumber evidence="4">1.1.1.-</ecNumber>
    </recommendedName>
    <alternativeName>
        <fullName evidence="5">Andrastin A biosynthesis cluster protein F</fullName>
    </alternativeName>
</protein>
<sequence length="255" mass="26909">MSLLQDIVLIITGSASGIGLATATAALSQGAKILGVDVSWAPVSLTEHASYKFIQANLTHEATPKQVVETCIKEFGRIDGLLNIAGIMDQNSSVDSLTDDMWERCIAINLTAPVKLMREVIPIMRQQKSGSIVNVGSKAATSGAASGVAYTASKHGLMGATKNVAWRYKQEGIRCNAVCPGGVPTGIVQASDPTTWDKDALATMSHIHQAHAADRQEGLGVEAEDIANCLLFLVSSQSKRINGAIIPVDNAWSVI</sequence>
<proteinExistence type="evidence at protein level"/>
<evidence type="ECO:0000250" key="1">
    <source>
        <dbReference type="UniProtKB" id="L0E2Z4"/>
    </source>
</evidence>
<evidence type="ECO:0000250" key="2">
    <source>
        <dbReference type="UniProtKB" id="O93868"/>
    </source>
</evidence>
<evidence type="ECO:0000255" key="3">
    <source>
        <dbReference type="PROSITE-ProRule" id="PRU10001"/>
    </source>
</evidence>
<evidence type="ECO:0000269" key="4">
    <source ref="2"/>
</evidence>
<evidence type="ECO:0000303" key="5">
    <source ref="2"/>
</evidence>
<evidence type="ECO:0000305" key="6"/>
<reference key="1">
    <citation type="journal article" date="2008" name="Nat. Biotechnol.">
        <title>Genome sequencing and analysis of the filamentous fungus Penicillium chrysogenum.</title>
        <authorList>
            <person name="van den Berg M.A."/>
            <person name="Albang R."/>
            <person name="Albermann K."/>
            <person name="Badger J.H."/>
            <person name="Daran J.-M."/>
            <person name="Driessen A.J.M."/>
            <person name="Garcia-Estrada C."/>
            <person name="Fedorova N.D."/>
            <person name="Harris D.M."/>
            <person name="Heijne W.H.M."/>
            <person name="Joardar V.S."/>
            <person name="Kiel J.A.K.W."/>
            <person name="Kovalchuk A."/>
            <person name="Martin J.F."/>
            <person name="Nierman W.C."/>
            <person name="Nijland J.G."/>
            <person name="Pronk J.T."/>
            <person name="Roubos J.A."/>
            <person name="van der Klei I.J."/>
            <person name="van Peij N.N.M.E."/>
            <person name="Veenhuis M."/>
            <person name="von Doehren H."/>
            <person name="Wagner C."/>
            <person name="Wortman J.R."/>
            <person name="Bovenberg R.A.L."/>
        </authorList>
    </citation>
    <scope>NUCLEOTIDE SEQUENCE [LARGE SCALE GENOMIC DNA]</scope>
    <source>
        <strain>ATCC 28089 / DSM 1075 / NRRL 1951 / Wisconsin 54-1255</strain>
    </source>
</reference>
<reference key="2">
    <citation type="journal article" date="2013" name="Tetrahedron">
        <title>Reconstituted biosynthesis of fungal meroterpenoid andrastin A.</title>
        <authorList>
            <person name="Matsuda Y."/>
            <person name="Awakawa T."/>
            <person name="Abe I."/>
        </authorList>
    </citation>
    <scope>IDENTIFICATION</scope>
    <scope>FUNCTION</scope>
    <scope>CATALYTIC ACTIVITY</scope>
    <scope>PATHWAY</scope>
</reference>
<feature type="chain" id="PRO_0000446481" description="Short chain dehydrogenase adrF">
    <location>
        <begin position="1"/>
        <end position="255"/>
    </location>
</feature>
<feature type="active site" description="Proton acceptor" evidence="3">
    <location>
        <position position="150"/>
    </location>
</feature>
<feature type="active site" description="Lowers pKa of active site Tyr" evidence="2">
    <location>
        <position position="154"/>
    </location>
</feature>
<feature type="binding site" evidence="1">
    <location>
        <position position="11"/>
    </location>
    <ligand>
        <name>NADP(+)</name>
        <dbReference type="ChEBI" id="CHEBI:58349"/>
    </ligand>
</feature>
<feature type="binding site" evidence="1">
    <location>
        <position position="118"/>
    </location>
    <ligand>
        <name>NADP(+)</name>
        <dbReference type="ChEBI" id="CHEBI:58349"/>
    </ligand>
</feature>
<feature type="binding site" evidence="2">
    <location>
        <position position="150"/>
    </location>
    <ligand>
        <name>NADP(+)</name>
        <dbReference type="ChEBI" id="CHEBI:58349"/>
    </ligand>
</feature>
<feature type="binding site" evidence="2">
    <location>
        <position position="154"/>
    </location>
    <ligand>
        <name>NADP(+)</name>
        <dbReference type="ChEBI" id="CHEBI:58349"/>
    </ligand>
</feature>
<feature type="binding site" evidence="2">
    <location>
        <position position="183"/>
    </location>
    <ligand>
        <name>NADP(+)</name>
        <dbReference type="ChEBI" id="CHEBI:58349"/>
    </ligand>
</feature>
<comment type="function">
    <text evidence="4">Short chain dehydrogenase; part of the gene cluster that mediates the biosynthesis of andrastins, meroterpenoid compounds that exhibit inhibitory activity against ras farnesyltransferase, suggesting that they could be promising leads for antitumor agents (Ref.2). The first step of the pathway is the synthesis of 3,5-dimethylorsellinic acid (DMOA) by the polyketide synthase adrD via condensation of one acetyl-CoA starter unit with 3 malonyl-CoA units and 2 methylations (Ref.2). DMAO is then converted to farnesyl-DMAO by the prenyltransferase adrG (Ref.2). The methyltransferase adrK catalyzes the methylation of the carboxyl group of farnesyl-DMAO to farnesyl-DMAO methyl ester which is further converted to epoxyfarnesyl-DMAO methyl ester by the FAD-dependent monooxygenase adrH (Ref.2). The terpene cyclase adrI then catalyzes the carbon skeletal rearrangement to generate the andrastin E, the first compound in the pathway having the andrastin scaffold, with the tetracyclic ring system (Ref.2). The post-cyclization tailoring enzymes adrF, adrE, adrJ, and adrA, are involved in the conversion of andrastin E into andrastin A. The short chain dehydrogenase adrF is responsible for the oxidation of the C-3 a hydroxyl group of andrastin E to yield the corresponding ketone, andrastin D. The ketoreductase adrE stereoselectively reduces the carbonyl moiety to reverse the stereochemistry of the C-3 position to yield andrastin F. The acetyltransferase adrJ is the acetyltransferase that attaches the acetyl group to the C-3 hydroxyl group of andrastin F to yield andrastin C. Finally, the cytochrome P450 monooxygenase adrA catalyzes two sequential oxidation reactions of the C-23 methyl group, to generate the corresponding alcohol andrastin B, and aldehyde andrastin A (Ref.2).</text>
</comment>
<comment type="pathway">
    <text evidence="4">Secondary metabolite biosynthesis; terpenoid biosynthesis.</text>
</comment>
<comment type="similarity">
    <text evidence="6">Belongs to the short-chain dehydrogenases/reductases (SDR) family.</text>
</comment>